<evidence type="ECO:0000255" key="1">
    <source>
        <dbReference type="HAMAP-Rule" id="MF_00369"/>
    </source>
</evidence>
<evidence type="ECO:0000305" key="2"/>
<organism>
    <name type="scientific">Methanocorpusculum labreanum (strain ATCC 43576 / DSM 4855 / Z)</name>
    <dbReference type="NCBI Taxonomy" id="410358"/>
    <lineage>
        <taxon>Archaea</taxon>
        <taxon>Methanobacteriati</taxon>
        <taxon>Methanobacteriota</taxon>
        <taxon>Stenosarchaea group</taxon>
        <taxon>Methanomicrobia</taxon>
        <taxon>Methanomicrobiales</taxon>
        <taxon>Methanocorpusculaceae</taxon>
        <taxon>Methanocorpusculum</taxon>
    </lineage>
</organism>
<dbReference type="EMBL" id="CP000559">
    <property type="protein sequence ID" value="ABN07732.1"/>
    <property type="molecule type" value="Genomic_DNA"/>
</dbReference>
<dbReference type="RefSeq" id="WP_011833935.1">
    <property type="nucleotide sequence ID" value="NC_008942.1"/>
</dbReference>
<dbReference type="SMR" id="A2STS6"/>
<dbReference type="STRING" id="410358.Mlab_1568"/>
<dbReference type="GeneID" id="4795993"/>
<dbReference type="KEGG" id="mla:Mlab_1568"/>
<dbReference type="eggNOG" id="arCOG04129">
    <property type="taxonomic scope" value="Archaea"/>
</dbReference>
<dbReference type="HOGENOM" id="CLU_103610_1_1_2"/>
<dbReference type="OrthoDB" id="6295at2157"/>
<dbReference type="Proteomes" id="UP000000365">
    <property type="component" value="Chromosome"/>
</dbReference>
<dbReference type="GO" id="GO:1990904">
    <property type="term" value="C:ribonucleoprotein complex"/>
    <property type="evidence" value="ECO:0007669"/>
    <property type="project" value="UniProtKB-KW"/>
</dbReference>
<dbReference type="GO" id="GO:0005840">
    <property type="term" value="C:ribosome"/>
    <property type="evidence" value="ECO:0007669"/>
    <property type="project" value="UniProtKB-KW"/>
</dbReference>
<dbReference type="GO" id="GO:0003735">
    <property type="term" value="F:structural constituent of ribosome"/>
    <property type="evidence" value="ECO:0007669"/>
    <property type="project" value="InterPro"/>
</dbReference>
<dbReference type="GO" id="GO:0006412">
    <property type="term" value="P:translation"/>
    <property type="evidence" value="ECO:0007669"/>
    <property type="project" value="UniProtKB-UniRule"/>
</dbReference>
<dbReference type="FunFam" id="2.30.30.70:FF:000001">
    <property type="entry name" value="60S ribosomal protein L21"/>
    <property type="match status" value="1"/>
</dbReference>
<dbReference type="Gene3D" id="2.30.30.70">
    <property type="entry name" value="Ribosomal protein L21"/>
    <property type="match status" value="1"/>
</dbReference>
<dbReference type="HAMAP" id="MF_00369">
    <property type="entry name" value="Ribosomal_eL21"/>
    <property type="match status" value="1"/>
</dbReference>
<dbReference type="InterPro" id="IPR001147">
    <property type="entry name" value="Ribosomal_eL21"/>
</dbReference>
<dbReference type="InterPro" id="IPR022856">
    <property type="entry name" value="Ribosomal_eL21_arc"/>
</dbReference>
<dbReference type="InterPro" id="IPR018259">
    <property type="entry name" value="Ribosomal_eL21_CS"/>
</dbReference>
<dbReference type="InterPro" id="IPR036948">
    <property type="entry name" value="Ribosomal_eL21_sf"/>
</dbReference>
<dbReference type="InterPro" id="IPR008991">
    <property type="entry name" value="Translation_prot_SH3-like_sf"/>
</dbReference>
<dbReference type="NCBIfam" id="NF003303">
    <property type="entry name" value="PRK04306.1"/>
    <property type="match status" value="1"/>
</dbReference>
<dbReference type="PANTHER" id="PTHR20981">
    <property type="entry name" value="60S RIBOSOMAL PROTEIN L21"/>
    <property type="match status" value="1"/>
</dbReference>
<dbReference type="Pfam" id="PF01157">
    <property type="entry name" value="Ribosomal_L21e"/>
    <property type="match status" value="1"/>
</dbReference>
<dbReference type="SUPFAM" id="SSF50104">
    <property type="entry name" value="Translation proteins SH3-like domain"/>
    <property type="match status" value="1"/>
</dbReference>
<dbReference type="PROSITE" id="PS01171">
    <property type="entry name" value="RIBOSOMAL_L21E"/>
    <property type="match status" value="1"/>
</dbReference>
<reference key="1">
    <citation type="journal article" date="2009" name="Stand. Genomic Sci.">
        <title>Complete genome sequence of Methanocorpusculum labreanum type strain Z.</title>
        <authorList>
            <person name="Anderson I.J."/>
            <person name="Sieprawska-Lupa M."/>
            <person name="Goltsman E."/>
            <person name="Lapidus A."/>
            <person name="Copeland A."/>
            <person name="Glavina Del Rio T."/>
            <person name="Tice H."/>
            <person name="Dalin E."/>
            <person name="Barry K."/>
            <person name="Pitluck S."/>
            <person name="Hauser L."/>
            <person name="Land M."/>
            <person name="Lucas S."/>
            <person name="Richardson P."/>
            <person name="Whitman W.B."/>
            <person name="Kyrpides N.C."/>
        </authorList>
    </citation>
    <scope>NUCLEOTIDE SEQUENCE [LARGE SCALE GENOMIC DNA]</scope>
    <source>
        <strain>ATCC 43576 / DSM 4855 / Z</strain>
    </source>
</reference>
<keyword id="KW-1185">Reference proteome</keyword>
<keyword id="KW-0687">Ribonucleoprotein</keyword>
<keyword id="KW-0689">Ribosomal protein</keyword>
<accession>A2STS6</accession>
<protein>
    <recommendedName>
        <fullName evidence="1">Large ribosomal subunit protein eL21</fullName>
    </recommendedName>
    <alternativeName>
        <fullName evidence="2">50S ribosomal protein L21e</fullName>
    </alternativeName>
</protein>
<feature type="chain" id="PRO_1000007120" description="Large ribosomal subunit protein eL21">
    <location>
        <begin position="1"/>
        <end position="98"/>
    </location>
</feature>
<gene>
    <name evidence="1" type="primary">rpl21e</name>
    <name type="ordered locus">Mlab_1568</name>
</gene>
<sequence>MAKHNGIKKRTRYKLQKTLRTRGMPNVTKVIQNFDEGQKVHLVLDSSVQKGQPHPRFHGKTGTIVGKRGRAWLLEIKDGNATKTVIARPQHLTAQKYN</sequence>
<proteinExistence type="inferred from homology"/>
<name>RL21_METLZ</name>
<comment type="similarity">
    <text evidence="1">Belongs to the eukaryotic ribosomal protein eL21 family.</text>
</comment>